<evidence type="ECO:0000250" key="1">
    <source>
        <dbReference type="UniProtKB" id="Q6PAV2"/>
    </source>
</evidence>
<evidence type="ECO:0000255" key="2">
    <source>
        <dbReference type="PROSITE-ProRule" id="PRU00104"/>
    </source>
</evidence>
<evidence type="ECO:0000269" key="3">
    <source>
    </source>
</evidence>
<evidence type="ECO:0000303" key="4">
    <source>
    </source>
</evidence>
<evidence type="ECO:0000303" key="5">
    <source>
    </source>
</evidence>
<evidence type="ECO:0000303" key="6">
    <source>
    </source>
</evidence>
<evidence type="ECO:0000305" key="7"/>
<keyword id="KW-0025">Alternative splicing</keyword>
<keyword id="KW-0963">Cytoplasm</keyword>
<keyword id="KW-0221">Differentiation</keyword>
<keyword id="KW-1267">Proteomics identification</keyword>
<keyword id="KW-1185">Reference proteome</keyword>
<keyword id="KW-0677">Repeat</keyword>
<keyword id="KW-0744">Spermatogenesis</keyword>
<keyword id="KW-0808">Transferase</keyword>
<keyword id="KW-0833">Ubl conjugation pathway</keyword>
<accession>Q5GLZ8</accession>
<accession>Q5GC98</accession>
<accession>Q5GC99</accession>
<accession>Q5GCA0</accession>
<accession>Q8IXP9</accession>
<accession>Q9HCH9</accession>
<dbReference type="EC" id="2.3.2.26"/>
<dbReference type="EMBL" id="AY221963">
    <property type="protein sequence ID" value="AAO65480.1"/>
    <property type="molecule type" value="mRNA"/>
</dbReference>
<dbReference type="EMBL" id="AY650032">
    <property type="protein sequence ID" value="AAV66578.1"/>
    <property type="molecule type" value="mRNA"/>
</dbReference>
<dbReference type="EMBL" id="AY650033">
    <property type="protein sequence ID" value="AAV66579.1"/>
    <property type="molecule type" value="mRNA"/>
</dbReference>
<dbReference type="EMBL" id="AY650034">
    <property type="protein sequence ID" value="AAV66580.1"/>
    <property type="molecule type" value="mRNA"/>
</dbReference>
<dbReference type="EMBL" id="AB046813">
    <property type="protein sequence ID" value="BAB13419.1"/>
    <property type="status" value="ALT_INIT"/>
    <property type="molecule type" value="mRNA"/>
</dbReference>
<dbReference type="EMBL" id="AC024258">
    <property type="status" value="NOT_ANNOTATED_CDS"/>
    <property type="molecule type" value="Genomic_DNA"/>
</dbReference>
<dbReference type="EMBL" id="AL133551">
    <property type="status" value="NOT_ANNOTATED_CDS"/>
    <property type="molecule type" value="Genomic_DNA"/>
</dbReference>
<dbReference type="EMBL" id="AL356741">
    <property type="status" value="NOT_ANNOTATED_CDS"/>
    <property type="molecule type" value="Genomic_DNA"/>
</dbReference>
<dbReference type="EMBL" id="BC039600">
    <property type="protein sequence ID" value="AAH39600.1"/>
    <property type="molecule type" value="mRNA"/>
</dbReference>
<dbReference type="CCDS" id="CCDS41533.1">
    <molecule id="Q5GLZ8-1"/>
</dbReference>
<dbReference type="CCDS" id="CCDS60541.1">
    <molecule id="Q5GLZ8-3"/>
</dbReference>
<dbReference type="CCDS" id="CCDS60542.1">
    <molecule id="Q5GLZ8-4"/>
</dbReference>
<dbReference type="CCDS" id="CCDS7274.1">
    <molecule id="Q5GLZ8-2"/>
</dbReference>
<dbReference type="RefSeq" id="NP_001265114.1">
    <molecule id="Q5GLZ8-3"/>
    <property type="nucleotide sequence ID" value="NM_001278185.2"/>
</dbReference>
<dbReference type="RefSeq" id="NP_001265115.1">
    <property type="nucleotide sequence ID" value="NM_001278186.1"/>
</dbReference>
<dbReference type="RefSeq" id="NP_001265116.1">
    <molecule id="Q5GLZ8-4"/>
    <property type="nucleotide sequence ID" value="NM_001278187.2"/>
</dbReference>
<dbReference type="RefSeq" id="NP_056416.2">
    <molecule id="Q5GLZ8-2"/>
    <property type="nucleotide sequence ID" value="NM_015601.3"/>
</dbReference>
<dbReference type="RefSeq" id="NP_071362.1">
    <molecule id="Q5GLZ8-1"/>
    <property type="nucleotide sequence ID" value="NM_022079.3"/>
</dbReference>
<dbReference type="RefSeq" id="XP_024303698.1">
    <molecule id="Q5GLZ8-1"/>
    <property type="nucleotide sequence ID" value="XM_024447930.2"/>
</dbReference>
<dbReference type="RefSeq" id="XP_047280947.1">
    <molecule id="Q5GLZ8-1"/>
    <property type="nucleotide sequence ID" value="XM_047424991.1"/>
</dbReference>
<dbReference type="RefSeq" id="XP_047280948.1">
    <molecule id="Q5GLZ8-2"/>
    <property type="nucleotide sequence ID" value="XM_047424992.1"/>
</dbReference>
<dbReference type="RefSeq" id="XP_047280949.1">
    <molecule id="Q5GLZ8-2"/>
    <property type="nucleotide sequence ID" value="XM_047424993.1"/>
</dbReference>
<dbReference type="RefSeq" id="XP_054221439.1">
    <molecule id="Q5GLZ8-1"/>
    <property type="nucleotide sequence ID" value="XM_054365464.1"/>
</dbReference>
<dbReference type="RefSeq" id="XP_054221440.1">
    <molecule id="Q5GLZ8-1"/>
    <property type="nucleotide sequence ID" value="XM_054365465.1"/>
</dbReference>
<dbReference type="RefSeq" id="XP_054221441.1">
    <molecule id="Q5GLZ8-1"/>
    <property type="nucleotide sequence ID" value="XM_054365466.1"/>
</dbReference>
<dbReference type="RefSeq" id="XP_054221442.1">
    <molecule id="Q5GLZ8-2"/>
    <property type="nucleotide sequence ID" value="XM_054365467.1"/>
</dbReference>
<dbReference type="RefSeq" id="XP_054221443.1">
    <molecule id="Q5GLZ8-2"/>
    <property type="nucleotide sequence ID" value="XM_054365468.1"/>
</dbReference>
<dbReference type="SMR" id="Q5GLZ8"/>
<dbReference type="BioGRID" id="117542">
    <property type="interactions" value="88"/>
</dbReference>
<dbReference type="FunCoup" id="Q5GLZ8">
    <property type="interactions" value="3802"/>
</dbReference>
<dbReference type="IntAct" id="Q5GLZ8">
    <property type="interactions" value="33"/>
</dbReference>
<dbReference type="STRING" id="9606.ENSP00000378624"/>
<dbReference type="GlyGen" id="Q5GLZ8">
    <property type="glycosylation" value="1 site, 1 O-linked glycan (1 site)"/>
</dbReference>
<dbReference type="iPTMnet" id="Q5GLZ8"/>
<dbReference type="MetOSite" id="Q5GLZ8"/>
<dbReference type="PhosphoSitePlus" id="Q5GLZ8"/>
<dbReference type="SwissPalm" id="Q5GLZ8"/>
<dbReference type="BioMuta" id="HERC4"/>
<dbReference type="DMDM" id="74707832"/>
<dbReference type="jPOST" id="Q5GLZ8"/>
<dbReference type="MassIVE" id="Q5GLZ8"/>
<dbReference type="PaxDb" id="9606-ENSP00000378624"/>
<dbReference type="PeptideAtlas" id="Q5GLZ8"/>
<dbReference type="ProteomicsDB" id="62837">
    <molecule id="Q5GLZ8-1"/>
</dbReference>
<dbReference type="ProteomicsDB" id="62838">
    <molecule id="Q5GLZ8-2"/>
</dbReference>
<dbReference type="ProteomicsDB" id="62839">
    <molecule id="Q5GLZ8-3"/>
</dbReference>
<dbReference type="ProteomicsDB" id="62840">
    <molecule id="Q5GLZ8-4"/>
</dbReference>
<dbReference type="ProteomicsDB" id="62841">
    <molecule id="Q5GLZ8-5"/>
</dbReference>
<dbReference type="ProteomicsDB" id="62842">
    <molecule id="Q5GLZ8-6"/>
</dbReference>
<dbReference type="Pumba" id="Q5GLZ8"/>
<dbReference type="Antibodypedia" id="28396">
    <property type="antibodies" value="169 antibodies from 27 providers"/>
</dbReference>
<dbReference type="DNASU" id="26091"/>
<dbReference type="Ensembl" id="ENST00000277817.10">
    <molecule id="Q5GLZ8-6"/>
    <property type="protein sequence ID" value="ENSP00000277817.6"/>
    <property type="gene ID" value="ENSG00000148634.16"/>
</dbReference>
<dbReference type="Ensembl" id="ENST00000373700.9">
    <molecule id="Q5GLZ8-2"/>
    <property type="protein sequence ID" value="ENSP00000362804.4"/>
    <property type="gene ID" value="ENSG00000148634.16"/>
</dbReference>
<dbReference type="Ensembl" id="ENST00000395198.7">
    <molecule id="Q5GLZ8-1"/>
    <property type="protein sequence ID" value="ENSP00000378624.3"/>
    <property type="gene ID" value="ENSG00000148634.16"/>
</dbReference>
<dbReference type="Ensembl" id="ENST00000412272.6">
    <molecule id="Q5GLZ8-3"/>
    <property type="protein sequence ID" value="ENSP00000416504.2"/>
    <property type="gene ID" value="ENSG00000148634.16"/>
</dbReference>
<dbReference type="Ensembl" id="ENST00000473533.6">
    <molecule id="Q5GLZ8-5"/>
    <property type="protein sequence ID" value="ENSP00000423671.1"/>
    <property type="gene ID" value="ENSG00000148634.16"/>
</dbReference>
<dbReference type="Ensembl" id="ENST00000492996.6">
    <molecule id="Q5GLZ8-4"/>
    <property type="protein sequence ID" value="ENSP00000422383.1"/>
    <property type="gene ID" value="ENSG00000148634.16"/>
</dbReference>
<dbReference type="GeneID" id="26091"/>
<dbReference type="KEGG" id="hsa:26091"/>
<dbReference type="MANE-Select" id="ENST00000373700.9">
    <molecule id="Q5GLZ8-2"/>
    <property type="protein sequence ID" value="ENSP00000362804.4"/>
    <property type="RefSeq nucleotide sequence ID" value="NM_015601.4"/>
    <property type="RefSeq protein sequence ID" value="NP_056416.2"/>
</dbReference>
<dbReference type="UCSC" id="uc001jng.5">
    <molecule id="Q5GLZ8-1"/>
    <property type="organism name" value="human"/>
</dbReference>
<dbReference type="AGR" id="HGNC:24521"/>
<dbReference type="CTD" id="26091"/>
<dbReference type="DisGeNET" id="26091"/>
<dbReference type="GeneCards" id="HERC4"/>
<dbReference type="HGNC" id="HGNC:24521">
    <property type="gene designation" value="HERC4"/>
</dbReference>
<dbReference type="HPA" id="ENSG00000148634">
    <property type="expression patterns" value="Low tissue specificity"/>
</dbReference>
<dbReference type="MIM" id="609248">
    <property type="type" value="gene"/>
</dbReference>
<dbReference type="neXtProt" id="NX_Q5GLZ8"/>
<dbReference type="OpenTargets" id="ENSG00000148634"/>
<dbReference type="PharmGKB" id="PA134949021"/>
<dbReference type="VEuPathDB" id="HostDB:ENSG00000148634"/>
<dbReference type="eggNOG" id="KOG0941">
    <property type="taxonomic scope" value="Eukaryota"/>
</dbReference>
<dbReference type="GeneTree" id="ENSGT00940000158924"/>
<dbReference type="HOGENOM" id="CLU_2084036_0_0_1"/>
<dbReference type="InParanoid" id="Q5GLZ8"/>
<dbReference type="OMA" id="FKSQACW"/>
<dbReference type="OrthoDB" id="8068875at2759"/>
<dbReference type="PAN-GO" id="Q5GLZ8">
    <property type="GO annotations" value="4 GO annotations based on evolutionary models"/>
</dbReference>
<dbReference type="PhylomeDB" id="Q5GLZ8"/>
<dbReference type="TreeFam" id="TF315189"/>
<dbReference type="PathwayCommons" id="Q5GLZ8"/>
<dbReference type="Reactome" id="R-HSA-983168">
    <property type="pathway name" value="Antigen processing: Ubiquitination &amp; Proteasome degradation"/>
</dbReference>
<dbReference type="SignaLink" id="Q5GLZ8"/>
<dbReference type="SIGNOR" id="Q5GLZ8"/>
<dbReference type="UniPathway" id="UPA00143"/>
<dbReference type="BioGRID-ORCS" id="26091">
    <property type="hits" value="12 hits in 1201 CRISPR screens"/>
</dbReference>
<dbReference type="ChiTaRS" id="HERC4">
    <property type="organism name" value="human"/>
</dbReference>
<dbReference type="GenomeRNAi" id="26091"/>
<dbReference type="Pharos" id="Q5GLZ8">
    <property type="development level" value="Tbio"/>
</dbReference>
<dbReference type="PRO" id="PR:Q5GLZ8"/>
<dbReference type="Proteomes" id="UP000005640">
    <property type="component" value="Chromosome 10"/>
</dbReference>
<dbReference type="RNAct" id="Q5GLZ8">
    <property type="molecule type" value="protein"/>
</dbReference>
<dbReference type="Bgee" id="ENSG00000148634">
    <property type="expression patterns" value="Expressed in adrenal tissue and 185 other cell types or tissues"/>
</dbReference>
<dbReference type="ExpressionAtlas" id="Q5GLZ8">
    <property type="expression patterns" value="baseline and differential"/>
</dbReference>
<dbReference type="GO" id="GO:0005737">
    <property type="term" value="C:cytoplasm"/>
    <property type="evidence" value="ECO:0000318"/>
    <property type="project" value="GO_Central"/>
</dbReference>
<dbReference type="GO" id="GO:0005829">
    <property type="term" value="C:cytosol"/>
    <property type="evidence" value="ECO:0000314"/>
    <property type="project" value="HPA"/>
</dbReference>
<dbReference type="GO" id="GO:0001650">
    <property type="term" value="C:fibrillar center"/>
    <property type="evidence" value="ECO:0000314"/>
    <property type="project" value="HPA"/>
</dbReference>
<dbReference type="GO" id="GO:0061630">
    <property type="term" value="F:ubiquitin protein ligase activity"/>
    <property type="evidence" value="ECO:0000318"/>
    <property type="project" value="GO_Central"/>
</dbReference>
<dbReference type="GO" id="GO:0030154">
    <property type="term" value="P:cell differentiation"/>
    <property type="evidence" value="ECO:0007669"/>
    <property type="project" value="UniProtKB-KW"/>
</dbReference>
<dbReference type="GO" id="GO:0045879">
    <property type="term" value="P:negative regulation of smoothened signaling pathway"/>
    <property type="evidence" value="ECO:0000315"/>
    <property type="project" value="FlyBase"/>
</dbReference>
<dbReference type="GO" id="GO:0016567">
    <property type="term" value="P:protein ubiquitination"/>
    <property type="evidence" value="ECO:0000318"/>
    <property type="project" value="GO_Central"/>
</dbReference>
<dbReference type="GO" id="GO:0007283">
    <property type="term" value="P:spermatogenesis"/>
    <property type="evidence" value="ECO:0000250"/>
    <property type="project" value="UniProtKB"/>
</dbReference>
<dbReference type="GO" id="GO:0006511">
    <property type="term" value="P:ubiquitin-dependent protein catabolic process"/>
    <property type="evidence" value="ECO:0000318"/>
    <property type="project" value="GO_Central"/>
</dbReference>
<dbReference type="CDD" id="cd00078">
    <property type="entry name" value="HECTc"/>
    <property type="match status" value="1"/>
</dbReference>
<dbReference type="FunFam" id="2.130.10.30:FF:000014">
    <property type="entry name" value="probable E3 ubiquitin-protein ligase HERC4 isoform X1"/>
    <property type="match status" value="1"/>
</dbReference>
<dbReference type="FunFam" id="3.30.2160.10:FF:000004">
    <property type="entry name" value="probable E3 ubiquitin-protein ligase HERC4 isoform X1"/>
    <property type="match status" value="1"/>
</dbReference>
<dbReference type="FunFam" id="3.30.2410.10:FF:000003">
    <property type="entry name" value="probable E3 ubiquitin-protein ligase HERC4 isoform X1"/>
    <property type="match status" value="1"/>
</dbReference>
<dbReference type="FunFam" id="3.90.1750.10:FF:000010">
    <property type="entry name" value="probable E3 ubiquitin-protein ligase HERC4 isoform X1"/>
    <property type="match status" value="1"/>
</dbReference>
<dbReference type="FunFam" id="2.130.10.30:FF:000039">
    <property type="entry name" value="probable E3 ubiquitin-protein ligase HERC4 isoform X3"/>
    <property type="match status" value="1"/>
</dbReference>
<dbReference type="Gene3D" id="3.30.2160.10">
    <property type="entry name" value="Hect, E3 ligase catalytic domain"/>
    <property type="match status" value="1"/>
</dbReference>
<dbReference type="Gene3D" id="3.30.2410.10">
    <property type="entry name" value="Hect, E3 ligase catalytic domain"/>
    <property type="match status" value="1"/>
</dbReference>
<dbReference type="Gene3D" id="3.90.1750.10">
    <property type="entry name" value="Hect, E3 ligase catalytic domains"/>
    <property type="match status" value="1"/>
</dbReference>
<dbReference type="Gene3D" id="2.130.10.30">
    <property type="entry name" value="Regulator of chromosome condensation 1/beta-lactamase-inhibitor protein II"/>
    <property type="match status" value="2"/>
</dbReference>
<dbReference type="InterPro" id="IPR000569">
    <property type="entry name" value="HECT_dom"/>
</dbReference>
<dbReference type="InterPro" id="IPR035983">
    <property type="entry name" value="Hect_E3_ubiquitin_ligase"/>
</dbReference>
<dbReference type="InterPro" id="IPR009091">
    <property type="entry name" value="RCC1/BLIP-II"/>
</dbReference>
<dbReference type="InterPro" id="IPR000408">
    <property type="entry name" value="Reg_chr_condens"/>
</dbReference>
<dbReference type="InterPro" id="IPR051709">
    <property type="entry name" value="Ub-ligase/GTPase-reg"/>
</dbReference>
<dbReference type="PANTHER" id="PTHR45622:SF58">
    <property type="entry name" value="REGULATOR OF CHROMOSOME CONDENSATION DOMAIN-CONTAINING PROTEIN"/>
    <property type="match status" value="1"/>
</dbReference>
<dbReference type="PANTHER" id="PTHR45622">
    <property type="entry name" value="UBIQUITIN-PROTEIN LIGASE E3A-RELATED"/>
    <property type="match status" value="1"/>
</dbReference>
<dbReference type="Pfam" id="PF00632">
    <property type="entry name" value="HECT"/>
    <property type="match status" value="1"/>
</dbReference>
<dbReference type="Pfam" id="PF25390">
    <property type="entry name" value="WD40_RLD"/>
    <property type="match status" value="1"/>
</dbReference>
<dbReference type="PRINTS" id="PR00633">
    <property type="entry name" value="RCCNDNSATION"/>
</dbReference>
<dbReference type="SMART" id="SM00119">
    <property type="entry name" value="HECTc"/>
    <property type="match status" value="1"/>
</dbReference>
<dbReference type="SUPFAM" id="SSF56204">
    <property type="entry name" value="Hect, E3 ligase catalytic domain"/>
    <property type="match status" value="1"/>
</dbReference>
<dbReference type="SUPFAM" id="SSF50985">
    <property type="entry name" value="RCC1/BLIP-II"/>
    <property type="match status" value="1"/>
</dbReference>
<dbReference type="PROSITE" id="PS50237">
    <property type="entry name" value="HECT"/>
    <property type="match status" value="1"/>
</dbReference>
<dbReference type="PROSITE" id="PS00626">
    <property type="entry name" value="RCC1_2"/>
    <property type="match status" value="3"/>
</dbReference>
<dbReference type="PROSITE" id="PS50012">
    <property type="entry name" value="RCC1_3"/>
    <property type="match status" value="7"/>
</dbReference>
<organism>
    <name type="scientific">Homo sapiens</name>
    <name type="common">Human</name>
    <dbReference type="NCBI Taxonomy" id="9606"/>
    <lineage>
        <taxon>Eukaryota</taxon>
        <taxon>Metazoa</taxon>
        <taxon>Chordata</taxon>
        <taxon>Craniata</taxon>
        <taxon>Vertebrata</taxon>
        <taxon>Euteleostomi</taxon>
        <taxon>Mammalia</taxon>
        <taxon>Eutheria</taxon>
        <taxon>Euarchontoglires</taxon>
        <taxon>Primates</taxon>
        <taxon>Haplorrhini</taxon>
        <taxon>Catarrhini</taxon>
        <taxon>Hominidae</taxon>
        <taxon>Homo</taxon>
    </lineage>
</organism>
<comment type="function">
    <text evidence="1">Probable E3 ubiquitin-protein ligase involved in either protein trafficking or in the distribution of cellular structures. Required for spermatozoon maturation and fertility, and for the removal of the cytoplasmic droplet of the spermatozoon. E3 ubiquitin-protein ligases accept ubiquitin from an E2 ubiquitin-conjugating enzyme in the form of a thioester and then directly transfer it to targeted substrates.</text>
</comment>
<comment type="catalytic activity">
    <reaction>
        <text>S-ubiquitinyl-[E2 ubiquitin-conjugating enzyme]-L-cysteine + [acceptor protein]-L-lysine = [E2 ubiquitin-conjugating enzyme]-L-cysteine + N(6)-ubiquitinyl-[acceptor protein]-L-lysine.</text>
        <dbReference type="EC" id="2.3.2.26"/>
    </reaction>
</comment>
<comment type="pathway">
    <text>Protein modification; protein ubiquitination.</text>
</comment>
<comment type="subcellular location">
    <subcellularLocation>
        <location evidence="3">Cytoplasm</location>
        <location evidence="3">Cytosol</location>
    </subcellularLocation>
    <text>shows a punctate cytoplasmic distribution.</text>
</comment>
<comment type="alternative products">
    <event type="alternative splicing"/>
    <isoform>
        <id>Q5GLZ8-1</id>
        <name>1</name>
        <sequence type="displayed"/>
    </isoform>
    <isoform>
        <id>Q5GLZ8-2</id>
        <name>2</name>
        <sequence type="described" ref="VSP_023178"/>
    </isoform>
    <isoform>
        <id>Q5GLZ8-3</id>
        <name>3</name>
        <sequence type="described" ref="VSP_023179"/>
    </isoform>
    <isoform>
        <id>Q5GLZ8-4</id>
        <name>4</name>
        <sequence type="described" ref="VSP_023174 VSP_023175"/>
    </isoform>
    <isoform>
        <id>Q5GLZ8-5</id>
        <name>5</name>
        <name>2</name>
        <sequence type="described" ref="VSP_023173 VSP_023176"/>
    </isoform>
    <isoform>
        <id>Q5GLZ8-6</id>
        <name>6</name>
        <sequence type="described" ref="VSP_023172 VSP_039551"/>
    </isoform>
</comment>
<comment type="tissue specificity">
    <text evidence="3">Expressed in brain and testis and detected in heart and placenta.</text>
</comment>
<comment type="developmental stage">
    <text evidence="3">Expressed in fetal brain.</text>
</comment>
<comment type="sequence caution" evidence="7">
    <conflict type="erroneous initiation">
        <sequence resource="EMBL-CDS" id="BAB13419"/>
    </conflict>
    <text>Extended N-terminus.</text>
</comment>
<name>HERC4_HUMAN</name>
<reference key="1">
    <citation type="journal article" date="2005" name="Genomics">
        <title>The human HERC family of ubiquitin ligases: novel members, genomic organization, expression profiling, and evolutionary aspects.</title>
        <authorList>
            <person name="Hochrainer K."/>
            <person name="Mayer H."/>
            <person name="Baranyi U."/>
            <person name="Binder B.R."/>
            <person name="Lipp J."/>
            <person name="Kroismayr R."/>
        </authorList>
    </citation>
    <scope>NUCLEOTIDE SEQUENCE [MRNA] (ISOFORMS 1; 3; 4 AND 5)</scope>
    <scope>TISSUE SPECIFICITY</scope>
    <scope>DEVELOPMENTAL STAGE</scope>
    <scope>SUBCELLULAR LOCATION</scope>
    <source>
        <tissue>Cervix carcinoma</tissue>
    </source>
</reference>
<reference key="2">
    <citation type="journal article" date="2000" name="DNA Res.">
        <title>Prediction of the coding sequences of unidentified human genes. XVIII. The complete sequences of 100 new cDNA clones from brain which code for large proteins in vitro.</title>
        <authorList>
            <person name="Nagase T."/>
            <person name="Kikuno R."/>
            <person name="Nakayama M."/>
            <person name="Hirosawa M."/>
            <person name="Ohara O."/>
        </authorList>
    </citation>
    <scope>NUCLEOTIDE SEQUENCE [LARGE SCALE MRNA] (ISOFORM 6)</scope>
    <source>
        <tissue>Brain</tissue>
    </source>
</reference>
<reference key="3">
    <citation type="journal article" date="2004" name="Nature">
        <title>The DNA sequence and comparative analysis of human chromosome 10.</title>
        <authorList>
            <person name="Deloukas P."/>
            <person name="Earthrowl M.E."/>
            <person name="Grafham D.V."/>
            <person name="Rubenfield M."/>
            <person name="French L."/>
            <person name="Steward C.A."/>
            <person name="Sims S.K."/>
            <person name="Jones M.C."/>
            <person name="Searle S."/>
            <person name="Scott C."/>
            <person name="Howe K."/>
            <person name="Hunt S.E."/>
            <person name="Andrews T.D."/>
            <person name="Gilbert J.G.R."/>
            <person name="Swarbreck D."/>
            <person name="Ashurst J.L."/>
            <person name="Taylor A."/>
            <person name="Battles J."/>
            <person name="Bird C.P."/>
            <person name="Ainscough R."/>
            <person name="Almeida J.P."/>
            <person name="Ashwell R.I.S."/>
            <person name="Ambrose K.D."/>
            <person name="Babbage A.K."/>
            <person name="Bagguley C.L."/>
            <person name="Bailey J."/>
            <person name="Banerjee R."/>
            <person name="Bates K."/>
            <person name="Beasley H."/>
            <person name="Bray-Allen S."/>
            <person name="Brown A.J."/>
            <person name="Brown J.Y."/>
            <person name="Burford D.C."/>
            <person name="Burrill W."/>
            <person name="Burton J."/>
            <person name="Cahill P."/>
            <person name="Camire D."/>
            <person name="Carter N.P."/>
            <person name="Chapman J.C."/>
            <person name="Clark S.Y."/>
            <person name="Clarke G."/>
            <person name="Clee C.M."/>
            <person name="Clegg S."/>
            <person name="Corby N."/>
            <person name="Coulson A."/>
            <person name="Dhami P."/>
            <person name="Dutta I."/>
            <person name="Dunn M."/>
            <person name="Faulkner L."/>
            <person name="Frankish A."/>
            <person name="Frankland J.A."/>
            <person name="Garner P."/>
            <person name="Garnett J."/>
            <person name="Gribble S."/>
            <person name="Griffiths C."/>
            <person name="Grocock R."/>
            <person name="Gustafson E."/>
            <person name="Hammond S."/>
            <person name="Harley J.L."/>
            <person name="Hart E."/>
            <person name="Heath P.D."/>
            <person name="Ho T.P."/>
            <person name="Hopkins B."/>
            <person name="Horne J."/>
            <person name="Howden P.J."/>
            <person name="Huckle E."/>
            <person name="Hynds C."/>
            <person name="Johnson C."/>
            <person name="Johnson D."/>
            <person name="Kana A."/>
            <person name="Kay M."/>
            <person name="Kimberley A.M."/>
            <person name="Kershaw J.K."/>
            <person name="Kokkinaki M."/>
            <person name="Laird G.K."/>
            <person name="Lawlor S."/>
            <person name="Lee H.M."/>
            <person name="Leongamornlert D.A."/>
            <person name="Laird G."/>
            <person name="Lloyd C."/>
            <person name="Lloyd D.M."/>
            <person name="Loveland J."/>
            <person name="Lovell J."/>
            <person name="McLaren S."/>
            <person name="McLay K.E."/>
            <person name="McMurray A."/>
            <person name="Mashreghi-Mohammadi M."/>
            <person name="Matthews L."/>
            <person name="Milne S."/>
            <person name="Nickerson T."/>
            <person name="Nguyen M."/>
            <person name="Overton-Larty E."/>
            <person name="Palmer S.A."/>
            <person name="Pearce A.V."/>
            <person name="Peck A.I."/>
            <person name="Pelan S."/>
            <person name="Phillimore B."/>
            <person name="Porter K."/>
            <person name="Rice C.M."/>
            <person name="Rogosin A."/>
            <person name="Ross M.T."/>
            <person name="Sarafidou T."/>
            <person name="Sehra H.K."/>
            <person name="Shownkeen R."/>
            <person name="Skuce C.D."/>
            <person name="Smith M."/>
            <person name="Standring L."/>
            <person name="Sycamore N."/>
            <person name="Tester J."/>
            <person name="Thorpe A."/>
            <person name="Torcasso W."/>
            <person name="Tracey A."/>
            <person name="Tromans A."/>
            <person name="Tsolas J."/>
            <person name="Wall M."/>
            <person name="Walsh J."/>
            <person name="Wang H."/>
            <person name="Weinstock K."/>
            <person name="West A.P."/>
            <person name="Willey D.L."/>
            <person name="Whitehead S.L."/>
            <person name="Wilming L."/>
            <person name="Wray P.W."/>
            <person name="Young L."/>
            <person name="Chen Y."/>
            <person name="Lovering R.C."/>
            <person name="Moschonas N.K."/>
            <person name="Siebert R."/>
            <person name="Fechtel K."/>
            <person name="Bentley D."/>
            <person name="Durbin R.M."/>
            <person name="Hubbard T."/>
            <person name="Doucette-Stamm L."/>
            <person name="Beck S."/>
            <person name="Smith D.R."/>
            <person name="Rogers J."/>
        </authorList>
    </citation>
    <scope>NUCLEOTIDE SEQUENCE [LARGE SCALE GENOMIC DNA]</scope>
</reference>
<reference key="4">
    <citation type="journal article" date="2004" name="Genome Res.">
        <title>The status, quality, and expansion of the NIH full-length cDNA project: the Mammalian Gene Collection (MGC).</title>
        <authorList>
            <consortium name="The MGC Project Team"/>
        </authorList>
    </citation>
    <scope>NUCLEOTIDE SEQUENCE [LARGE SCALE MRNA] (ISOFORM 2)</scope>
    <source>
        <tissue>Blood</tissue>
    </source>
</reference>
<reference key="5">
    <citation type="journal article" date="2011" name="BMC Syst. Biol.">
        <title>Initial characterization of the human central proteome.</title>
        <authorList>
            <person name="Burkard T.R."/>
            <person name="Planyavsky M."/>
            <person name="Kaupe I."/>
            <person name="Breitwieser F.P."/>
            <person name="Buerckstuemmer T."/>
            <person name="Bennett K.L."/>
            <person name="Superti-Furga G."/>
            <person name="Colinge J."/>
        </authorList>
    </citation>
    <scope>IDENTIFICATION BY MASS SPECTROMETRY [LARGE SCALE ANALYSIS]</scope>
</reference>
<protein>
    <recommendedName>
        <fullName>Probable E3 ubiquitin-protein ligase HERC4</fullName>
        <ecNumber>2.3.2.26</ecNumber>
    </recommendedName>
    <alternativeName>
        <fullName>HECT domain and RCC1-like domain-containing protein 4</fullName>
    </alternativeName>
    <alternativeName>
        <fullName>HECT-type E3 ubiquitin transferase HERC4</fullName>
    </alternativeName>
</protein>
<proteinExistence type="evidence at protein level"/>
<sequence length="1057" mass="118563">MLCWGNASFGQLGLGGIDEEIVLEPRKSDFFINKRVRDVGCGLRHTVFVLDDGTVYTCGCNDLGQLGHEKSRKKPEQVVALDAQNIVAVSCGEAHTLALNDKGQVYAWGLDSDGQLGLVGSEECIRVPRNIKSLSDIQIVQVACGYYHSLALSKASEVFCWGQNKYGQLGLGTDCKKQTSPQLLKSLLGIPFMQVAAGGAHSFVLTLSGAIFGWGRNKFGQLGLNDENDRYVPNLLKSLRSQKIVYICCGEDHTAALTKEGGVFTFGAGGYGQLGHNSTSHEINPRKVFELMGSIVTEIACGRQHTSAFVPSSGRIYSFGLGGNGQLGTGSTSNRKSPFTVKGNWYPYNGQCLPDIDSEEYFCVKRIFSGGDQSFSHYSSPQNCGPPDDFRCPNPTKQIWTVNEALIQKWLSYPSGRFPVEIANEIDGTFSSSGCLNGSFLAVSNDDHYRTGTRFSGVDMNAARLLFHKLIQPDHPQISQQVAASLEKNLIPKLTSSLPDVEALRFYLTLPECPLMSDSNNFTTIAIPFGTALVNLEKAPLKVLENWWSVLEPPLFLKIVELFKEVVVHLLKLYKIGIPPSERRIFNSFLHTALKVLEILHRVNEKMGQIIQYDKFYIHEVQELIDIRNDYINWVQQQAYGMDVNHGLTELADIPVTICTYPFVFDAQAKTTLLQTDAVLQMQMAIDQAHRQNVSSLFLPVIESVNPCLILVVRRENIVGDAMEVLRKTKNIDYKKPLKVIFVGEDAVDAGGVRKEFFLLIMRELLDPKYGMFRYYEDSRLIWFSDKTFEDSDLFHLIGVICGLAIYNCTIVDLHFPLALYKKLLKKKPSLDDLKELMPDVGRSMQQLLDYPEDDIEETFCLNFTITVENFGATEVKELVLNGADTAVNKQNRQEFVDAYVDYIFNKSVASLFDAFHAGFHKVCGGKVLLLFQPNELQAMVIGNTNYDWKELEKNTEYKGEYWAEHPTIKIFWEVFHELPLEKKKQFLLFLTGSDRIPILGMKSLKLVIQSTGGGEEYLPVSHTCFNLLDLPKYTEKETLRSKLIQAIDHNEGFSLI</sequence>
<gene>
    <name type="primary">HERC4</name>
    <name type="synonym">KIAA1593</name>
</gene>
<feature type="chain" id="PRO_0000278216" description="Probable E3 ubiquitin-protein ligase HERC4">
    <location>
        <begin position="1"/>
        <end position="1057"/>
    </location>
</feature>
<feature type="repeat" description="RCC1 1">
    <location>
        <begin position="1"/>
        <end position="51"/>
    </location>
</feature>
<feature type="repeat" description="RCC1 2">
    <location>
        <begin position="52"/>
        <end position="101"/>
    </location>
</feature>
<feature type="repeat" description="RCC1 3">
    <location>
        <begin position="102"/>
        <end position="154"/>
    </location>
</feature>
<feature type="repeat" description="RCC1 4">
    <location>
        <begin position="156"/>
        <end position="207"/>
    </location>
</feature>
<feature type="repeat" description="RCC1 5">
    <location>
        <begin position="208"/>
        <end position="259"/>
    </location>
</feature>
<feature type="repeat" description="RCC1 6">
    <location>
        <begin position="261"/>
        <end position="311"/>
    </location>
</feature>
<feature type="repeat" description="RCC1 7">
    <location>
        <begin position="313"/>
        <end position="368"/>
    </location>
</feature>
<feature type="domain" description="HECT" evidence="2">
    <location>
        <begin position="730"/>
        <end position="1057"/>
    </location>
</feature>
<feature type="active site" description="Glycyl thioester intermediate" evidence="2">
    <location>
        <position position="1025"/>
    </location>
</feature>
<feature type="splice variant" id="VSP_023172" description="In isoform 6." evidence="4">
    <location>
        <begin position="1"/>
        <end position="110"/>
    </location>
</feature>
<feature type="splice variant" id="VSP_023173" description="In isoform 5." evidence="5 6">
    <original>QVVALDAQNIVAVSCGEAHTLALNDKGQVYAWGLDSDGQLG</original>
    <variation>ILKVCQISRLYRLLVVTIIHLHFLKQVKSSVGDRINMANWV</variation>
    <location>
        <begin position="77"/>
        <end position="117"/>
    </location>
</feature>
<feature type="splice variant" id="VSP_023174" description="In isoform 4." evidence="6">
    <original>QVVALDAQNIVAVSCGEAHTLALNDKGQVYAWGL</original>
    <variation>FRSCFPGRSAMAPSRLTATSASQVQAILLPQPPE</variation>
    <location>
        <begin position="77"/>
        <end position="110"/>
    </location>
</feature>
<feature type="splice variant" id="VSP_023175" description="In isoform 4." evidence="6">
    <location>
        <begin position="111"/>
        <end position="1057"/>
    </location>
</feature>
<feature type="splice variant" id="VSP_039551" description="In isoform 6." evidence="4">
    <original>DSDGQLGLVGSEECIRVP</original>
    <variation>MCVDSLVRICSGLSYGRI</variation>
    <location>
        <begin position="111"/>
        <end position="128"/>
    </location>
</feature>
<feature type="splice variant" id="VSP_023176" description="In isoform 5." evidence="5 6">
    <location>
        <begin position="118"/>
        <end position="1057"/>
    </location>
</feature>
<feature type="splice variant" id="VSP_023178" description="In isoform 2." evidence="5">
    <location>
        <begin position="643"/>
        <end position="650"/>
    </location>
</feature>
<feature type="splice variant" id="VSP_023179" description="In isoform 3." evidence="6">
    <location>
        <begin position="788"/>
        <end position="865"/>
    </location>
</feature>
<feature type="sequence conflict" description="In Ref. 1; AAV66579." evidence="7" ref="1">
    <original>P</original>
    <variation>S</variation>
    <location>
        <position position="1032"/>
    </location>
</feature>